<protein>
    <recommendedName>
        <fullName evidence="4">Humanin-like 2</fullName>
        <shortName evidence="3">HN2</shortName>
    </recommendedName>
    <alternativeName>
        <fullName evidence="6">MT-RNR2-like protein 2</fullName>
    </alternativeName>
</protein>
<dbReference type="EMBL" id="AC008434">
    <property type="status" value="NOT_ANNOTATED_CDS"/>
    <property type="molecule type" value="Genomic_DNA"/>
</dbReference>
<dbReference type="RefSeq" id="NP_001177399.1">
    <property type="nucleotide sequence ID" value="NM_001190470.1"/>
</dbReference>
<dbReference type="BioMuta" id="HGNC:37156"/>
<dbReference type="DNASU" id="100462981"/>
<dbReference type="AGR" id="HGNC:37156"/>
<dbReference type="DisGeNET" id="100462981"/>
<dbReference type="GeneCards" id="MTRNR2L2"/>
<dbReference type="HGNC" id="HGNC:37156">
    <property type="gene designation" value="MTRNR2L2"/>
</dbReference>
<dbReference type="neXtProt" id="NX_P0CJ69"/>
<dbReference type="InParanoid" id="P0CJ69"/>
<dbReference type="PAN-GO" id="P0CJ69">
    <property type="GO annotations" value="2 GO annotations based on evolutionary models"/>
</dbReference>
<dbReference type="PhylomeDB" id="P0CJ69"/>
<dbReference type="PathwayCommons" id="P0CJ69"/>
<dbReference type="BioGRID-ORCS" id="100462981">
    <property type="hits" value="15 hits in 616 CRISPR screens"/>
</dbReference>
<dbReference type="Pharos" id="P0CJ69">
    <property type="development level" value="Tdark"/>
</dbReference>
<dbReference type="PRO" id="PR:P0CJ69"/>
<dbReference type="Proteomes" id="UP000005640">
    <property type="component" value="Unplaced"/>
</dbReference>
<dbReference type="GO" id="GO:0005737">
    <property type="term" value="C:cytoplasm"/>
    <property type="evidence" value="ECO:0007669"/>
    <property type="project" value="UniProtKB-SubCell"/>
</dbReference>
<dbReference type="GO" id="GO:0005576">
    <property type="term" value="C:extracellular region"/>
    <property type="evidence" value="ECO:0007669"/>
    <property type="project" value="UniProtKB-SubCell"/>
</dbReference>
<dbReference type="GO" id="GO:0048019">
    <property type="term" value="F:receptor antagonist activity"/>
    <property type="evidence" value="ECO:0000318"/>
    <property type="project" value="GO_Central"/>
</dbReference>
<dbReference type="GO" id="GO:1900118">
    <property type="term" value="P:negative regulation of execution phase of apoptosis"/>
    <property type="evidence" value="ECO:0000318"/>
    <property type="project" value="GO_Central"/>
</dbReference>
<dbReference type="CDD" id="cd20245">
    <property type="entry name" value="humanin"/>
    <property type="match status" value="1"/>
</dbReference>
<dbReference type="InterPro" id="IPR028139">
    <property type="entry name" value="Humanin"/>
</dbReference>
<dbReference type="PANTHER" id="PTHR33895:SF18">
    <property type="entry name" value="HUMANIN-LIKE 1-RELATED"/>
    <property type="match status" value="1"/>
</dbReference>
<dbReference type="PANTHER" id="PTHR33895">
    <property type="entry name" value="HUMANIN-LIKE 4"/>
    <property type="match status" value="1"/>
</dbReference>
<dbReference type="Pfam" id="PF15040">
    <property type="entry name" value="Humanin"/>
    <property type="match status" value="1"/>
</dbReference>
<feature type="chain" id="PRO_0000404551" description="Humanin-like 2">
    <location>
        <begin position="1"/>
        <end position="28"/>
    </location>
</feature>
<sequence>MAPRGFSCLLLSTSEIDLPVKRLLSSVF</sequence>
<keyword id="KW-0963">Cytoplasm</keyword>
<keyword id="KW-1185">Reference proteome</keyword>
<keyword id="KW-0964">Secreted</keyword>
<organism>
    <name type="scientific">Homo sapiens</name>
    <name type="common">Human</name>
    <dbReference type="NCBI Taxonomy" id="9606"/>
    <lineage>
        <taxon>Eukaryota</taxon>
        <taxon>Metazoa</taxon>
        <taxon>Chordata</taxon>
        <taxon>Craniata</taxon>
        <taxon>Vertebrata</taxon>
        <taxon>Euteleostomi</taxon>
        <taxon>Mammalia</taxon>
        <taxon>Eutheria</taxon>
        <taxon>Euarchontoglires</taxon>
        <taxon>Primates</taxon>
        <taxon>Haplorrhini</taxon>
        <taxon>Catarrhini</taxon>
        <taxon>Hominidae</taxon>
        <taxon>Homo</taxon>
    </lineage>
</organism>
<reference key="1">
    <citation type="journal article" date="2004" name="Nature">
        <title>The DNA sequence and comparative analysis of human chromosome 5.</title>
        <authorList>
            <person name="Schmutz J."/>
            <person name="Martin J."/>
            <person name="Terry A."/>
            <person name="Couronne O."/>
            <person name="Grimwood J."/>
            <person name="Lowry S."/>
            <person name="Gordon L.A."/>
            <person name="Scott D."/>
            <person name="Xie G."/>
            <person name="Huang W."/>
            <person name="Hellsten U."/>
            <person name="Tran-Gyamfi M."/>
            <person name="She X."/>
            <person name="Prabhakar S."/>
            <person name="Aerts A."/>
            <person name="Altherr M."/>
            <person name="Bajorek E."/>
            <person name="Black S."/>
            <person name="Branscomb E."/>
            <person name="Caoile C."/>
            <person name="Challacombe J.F."/>
            <person name="Chan Y.M."/>
            <person name="Denys M."/>
            <person name="Detter J.C."/>
            <person name="Escobar J."/>
            <person name="Flowers D."/>
            <person name="Fotopulos D."/>
            <person name="Glavina T."/>
            <person name="Gomez M."/>
            <person name="Gonzales E."/>
            <person name="Goodstein D."/>
            <person name="Grigoriev I."/>
            <person name="Groza M."/>
            <person name="Hammon N."/>
            <person name="Hawkins T."/>
            <person name="Haydu L."/>
            <person name="Israni S."/>
            <person name="Jett J."/>
            <person name="Kadner K."/>
            <person name="Kimball H."/>
            <person name="Kobayashi A."/>
            <person name="Lopez F."/>
            <person name="Lou Y."/>
            <person name="Martinez D."/>
            <person name="Medina C."/>
            <person name="Morgan J."/>
            <person name="Nandkeshwar R."/>
            <person name="Noonan J.P."/>
            <person name="Pitluck S."/>
            <person name="Pollard M."/>
            <person name="Predki P."/>
            <person name="Priest J."/>
            <person name="Ramirez L."/>
            <person name="Retterer J."/>
            <person name="Rodriguez A."/>
            <person name="Rogers S."/>
            <person name="Salamov A."/>
            <person name="Salazar A."/>
            <person name="Thayer N."/>
            <person name="Tice H."/>
            <person name="Tsai M."/>
            <person name="Ustaszewska A."/>
            <person name="Vo N."/>
            <person name="Wheeler J."/>
            <person name="Wu K."/>
            <person name="Yang J."/>
            <person name="Dickson M."/>
            <person name="Cheng J.-F."/>
            <person name="Eichler E.E."/>
            <person name="Olsen A."/>
            <person name="Pennacchio L.A."/>
            <person name="Rokhsar D.S."/>
            <person name="Richardson P."/>
            <person name="Lucas S.M."/>
            <person name="Myers R.M."/>
            <person name="Rubin E.M."/>
        </authorList>
    </citation>
    <scope>NUCLEOTIDE SEQUENCE [LARGE SCALE GENOMIC DNA]</scope>
</reference>
<reference key="2">
    <citation type="journal article" date="2009" name="Genomics">
        <title>Evidence for potential functionality of nuclearly-encoded humanin isoforms.</title>
        <authorList>
            <person name="Bodzioch M."/>
            <person name="Lapicka-Bodzioch K."/>
            <person name="Zapala B."/>
            <person name="Kamysz W."/>
            <person name="Kiec-Wilk B."/>
            <person name="Dembinska-Kiec A."/>
        </authorList>
    </citation>
    <scope>TISSUE SPECIFICITY</scope>
    <scope>INDUCTION</scope>
</reference>
<comment type="function">
    <text evidence="1">Plays a role as a neuroprotective and antiapoptotic factor.</text>
</comment>
<comment type="subcellular location">
    <subcellularLocation>
        <location evidence="1">Secreted</location>
    </subcellularLocation>
    <subcellularLocation>
        <location evidence="1">Cytoplasm</location>
    </subcellularLocation>
</comment>
<comment type="tissue specificity">
    <text evidence="2">Highly expressed in testis. Also expressed in kidney, heart, skeletal muscles and brain.</text>
</comment>
<comment type="induction">
    <text evidence="2">Down-regulated 6 hours following staurosporine (STS) treatment and up-regulated 24 hours following STS treatment. Up-regulated 6 hours following beta-carotene treatment, returning to its basal level 24 hours following beta-carotene treatment.</text>
</comment>
<comment type="similarity">
    <text evidence="4">Belongs to the humanin family.</text>
</comment>
<comment type="caution">
    <text evidence="5">The humanin peptide has been shown to be biologically active but is the product of a mitochondrial gene, MT-RNR2. The mechanisms allowing the production and the secretion of humanin from the mitochondrial gene remaining unclear, the possibility exist that the physiologically active humanin peptide is encoded by one of the related genes present in the nuclear genome including the one described here (PubMed:19477263).</text>
</comment>
<accession>P0CJ69</accession>
<gene>
    <name evidence="6" type="primary">MTRNR2L2</name>
</gene>
<name>HMN2_HUMAN</name>
<proteinExistence type="evidence at transcript level"/>
<evidence type="ECO:0000250" key="1">
    <source>
        <dbReference type="UniProtKB" id="Q8IVG9"/>
    </source>
</evidence>
<evidence type="ECO:0000269" key="2">
    <source>
    </source>
</evidence>
<evidence type="ECO:0000303" key="3">
    <source>
    </source>
</evidence>
<evidence type="ECO:0000305" key="4"/>
<evidence type="ECO:0000305" key="5">
    <source>
    </source>
</evidence>
<evidence type="ECO:0000312" key="6">
    <source>
        <dbReference type="HGNC" id="HGNC:37156"/>
    </source>
</evidence>